<name>DEF_PROM1</name>
<dbReference type="EC" id="3.5.1.88" evidence="1"/>
<dbReference type="EMBL" id="CP000553">
    <property type="protein sequence ID" value="ABM74696.1"/>
    <property type="molecule type" value="Genomic_DNA"/>
</dbReference>
<dbReference type="RefSeq" id="WP_011822928.1">
    <property type="nucleotide sequence ID" value="NC_008819.1"/>
</dbReference>
<dbReference type="SMR" id="A2BZN6"/>
<dbReference type="KEGG" id="pme:NATL1_01321"/>
<dbReference type="eggNOG" id="COG0242">
    <property type="taxonomic scope" value="Bacteria"/>
</dbReference>
<dbReference type="HOGENOM" id="CLU_061901_4_2_3"/>
<dbReference type="Proteomes" id="UP000002592">
    <property type="component" value="Chromosome"/>
</dbReference>
<dbReference type="GO" id="GO:0046872">
    <property type="term" value="F:metal ion binding"/>
    <property type="evidence" value="ECO:0007669"/>
    <property type="project" value="UniProtKB-KW"/>
</dbReference>
<dbReference type="GO" id="GO:0042586">
    <property type="term" value="F:peptide deformylase activity"/>
    <property type="evidence" value="ECO:0007669"/>
    <property type="project" value="UniProtKB-UniRule"/>
</dbReference>
<dbReference type="GO" id="GO:0043686">
    <property type="term" value="P:co-translational protein modification"/>
    <property type="evidence" value="ECO:0007669"/>
    <property type="project" value="TreeGrafter"/>
</dbReference>
<dbReference type="GO" id="GO:0006412">
    <property type="term" value="P:translation"/>
    <property type="evidence" value="ECO:0007669"/>
    <property type="project" value="UniProtKB-UniRule"/>
</dbReference>
<dbReference type="CDD" id="cd00487">
    <property type="entry name" value="Pep_deformylase"/>
    <property type="match status" value="1"/>
</dbReference>
<dbReference type="FunFam" id="3.90.45.10:FF:000005">
    <property type="entry name" value="Peptide deformylase"/>
    <property type="match status" value="1"/>
</dbReference>
<dbReference type="Gene3D" id="3.90.45.10">
    <property type="entry name" value="Peptide deformylase"/>
    <property type="match status" value="1"/>
</dbReference>
<dbReference type="HAMAP" id="MF_00163">
    <property type="entry name" value="Pep_deformylase"/>
    <property type="match status" value="1"/>
</dbReference>
<dbReference type="InterPro" id="IPR023635">
    <property type="entry name" value="Peptide_deformylase"/>
</dbReference>
<dbReference type="InterPro" id="IPR036821">
    <property type="entry name" value="Peptide_deformylase_sf"/>
</dbReference>
<dbReference type="NCBIfam" id="TIGR00079">
    <property type="entry name" value="pept_deformyl"/>
    <property type="match status" value="1"/>
</dbReference>
<dbReference type="NCBIfam" id="NF001159">
    <property type="entry name" value="PRK00150.1-3"/>
    <property type="match status" value="1"/>
</dbReference>
<dbReference type="PANTHER" id="PTHR10458">
    <property type="entry name" value="PEPTIDE DEFORMYLASE"/>
    <property type="match status" value="1"/>
</dbReference>
<dbReference type="PANTHER" id="PTHR10458:SF22">
    <property type="entry name" value="PEPTIDE DEFORMYLASE"/>
    <property type="match status" value="1"/>
</dbReference>
<dbReference type="Pfam" id="PF01327">
    <property type="entry name" value="Pep_deformylase"/>
    <property type="match status" value="1"/>
</dbReference>
<dbReference type="PIRSF" id="PIRSF004749">
    <property type="entry name" value="Pep_def"/>
    <property type="match status" value="1"/>
</dbReference>
<dbReference type="PRINTS" id="PR01576">
    <property type="entry name" value="PDEFORMYLASE"/>
</dbReference>
<dbReference type="SUPFAM" id="SSF56420">
    <property type="entry name" value="Peptide deformylase"/>
    <property type="match status" value="1"/>
</dbReference>
<feature type="chain" id="PRO_0000301080" description="Peptide deformylase">
    <location>
        <begin position="1"/>
        <end position="202"/>
    </location>
</feature>
<feature type="region of interest" description="Disordered" evidence="2">
    <location>
        <begin position="1"/>
        <end position="24"/>
    </location>
</feature>
<feature type="active site" evidence="1">
    <location>
        <position position="164"/>
    </location>
</feature>
<feature type="binding site" evidence="1">
    <location>
        <position position="121"/>
    </location>
    <ligand>
        <name>Fe cation</name>
        <dbReference type="ChEBI" id="CHEBI:24875"/>
    </ligand>
</feature>
<feature type="binding site" evidence="1">
    <location>
        <position position="163"/>
    </location>
    <ligand>
        <name>Fe cation</name>
        <dbReference type="ChEBI" id="CHEBI:24875"/>
    </ligand>
</feature>
<feature type="binding site" evidence="1">
    <location>
        <position position="167"/>
    </location>
    <ligand>
        <name>Fe cation</name>
        <dbReference type="ChEBI" id="CHEBI:24875"/>
    </ligand>
</feature>
<reference key="1">
    <citation type="journal article" date="2007" name="PLoS Genet.">
        <title>Patterns and implications of gene gain and loss in the evolution of Prochlorococcus.</title>
        <authorList>
            <person name="Kettler G.C."/>
            <person name="Martiny A.C."/>
            <person name="Huang K."/>
            <person name="Zucker J."/>
            <person name="Coleman M.L."/>
            <person name="Rodrigue S."/>
            <person name="Chen F."/>
            <person name="Lapidus A."/>
            <person name="Ferriera S."/>
            <person name="Johnson J."/>
            <person name="Steglich C."/>
            <person name="Church G.M."/>
            <person name="Richardson P."/>
            <person name="Chisholm S.W."/>
        </authorList>
    </citation>
    <scope>NUCLEOTIDE SEQUENCE [LARGE SCALE GENOMIC DNA]</scope>
    <source>
        <strain>NATL1A</strain>
    </source>
</reference>
<comment type="function">
    <text evidence="1">Removes the formyl group from the N-terminal Met of newly synthesized proteins. Requires at least a dipeptide for an efficient rate of reaction. N-terminal L-methionine is a prerequisite for activity but the enzyme has broad specificity at other positions.</text>
</comment>
<comment type="catalytic activity">
    <reaction evidence="1">
        <text>N-terminal N-formyl-L-methionyl-[peptide] + H2O = N-terminal L-methionyl-[peptide] + formate</text>
        <dbReference type="Rhea" id="RHEA:24420"/>
        <dbReference type="Rhea" id="RHEA-COMP:10639"/>
        <dbReference type="Rhea" id="RHEA-COMP:10640"/>
        <dbReference type="ChEBI" id="CHEBI:15377"/>
        <dbReference type="ChEBI" id="CHEBI:15740"/>
        <dbReference type="ChEBI" id="CHEBI:49298"/>
        <dbReference type="ChEBI" id="CHEBI:64731"/>
        <dbReference type="EC" id="3.5.1.88"/>
    </reaction>
</comment>
<comment type="cofactor">
    <cofactor evidence="1">
        <name>Fe(2+)</name>
        <dbReference type="ChEBI" id="CHEBI:29033"/>
    </cofactor>
    <text evidence="1">Binds 1 Fe(2+) ion.</text>
</comment>
<comment type="similarity">
    <text evidence="1">Belongs to the polypeptide deformylase family.</text>
</comment>
<protein>
    <recommendedName>
        <fullName evidence="1">Peptide deformylase</fullName>
        <shortName evidence="1">PDF</shortName>
        <ecNumber evidence="1">3.5.1.88</ecNumber>
    </recommendedName>
    <alternativeName>
        <fullName evidence="1">Polypeptide deformylase</fullName>
    </alternativeName>
</protein>
<organism>
    <name type="scientific">Prochlorococcus marinus (strain NATL1A)</name>
    <dbReference type="NCBI Taxonomy" id="167555"/>
    <lineage>
        <taxon>Bacteria</taxon>
        <taxon>Bacillati</taxon>
        <taxon>Cyanobacteriota</taxon>
        <taxon>Cyanophyceae</taxon>
        <taxon>Synechococcales</taxon>
        <taxon>Prochlorococcaceae</taxon>
        <taxon>Prochlorococcus</taxon>
    </lineage>
</organism>
<proteinExistence type="inferred from homology"/>
<accession>A2BZN6</accession>
<evidence type="ECO:0000255" key="1">
    <source>
        <dbReference type="HAMAP-Rule" id="MF_00163"/>
    </source>
</evidence>
<evidence type="ECO:0000256" key="2">
    <source>
        <dbReference type="SAM" id="MobiDB-lite"/>
    </source>
</evidence>
<keyword id="KW-0378">Hydrolase</keyword>
<keyword id="KW-0408">Iron</keyword>
<keyword id="KW-0479">Metal-binding</keyword>
<keyword id="KW-0648">Protein biosynthesis</keyword>
<gene>
    <name evidence="1" type="primary">def</name>
    <name type="ordered locus">NATL1_01321</name>
</gene>
<sequence>MAGSFAQLAKNAEKKKPSISVSKEPVENPPLKVYQLGDEALRTPANRIVKVDDAIRKLAKDMLITMYSSKGIGLAAPQVGIQKRLLVIDLNFEDPNSPPMVFINPEIISSSATVDTYEEGCLSIPGVYLNVLRPSSIKLSYRDEMGRPKKMNADGLMARCIQHEIDHLNGVCFVDKVTDEEELKKQLNENNFKRSDVIKATN</sequence>